<keyword id="KW-0227">DNA damage</keyword>
<keyword id="KW-0233">DNA recombination</keyword>
<keyword id="KW-0234">DNA repair</keyword>
<dbReference type="EMBL" id="CP000948">
    <property type="protein sequence ID" value="ACB03716.1"/>
    <property type="molecule type" value="Genomic_DNA"/>
</dbReference>
<dbReference type="RefSeq" id="WP_000399404.1">
    <property type="nucleotide sequence ID" value="NC_010473.1"/>
</dbReference>
<dbReference type="SMR" id="B1XB39"/>
<dbReference type="KEGG" id="ecd:ECDH10B_2733"/>
<dbReference type="HOGENOM" id="CLU_066645_1_0_6"/>
<dbReference type="GO" id="GO:0043590">
    <property type="term" value="C:bacterial nucleoid"/>
    <property type="evidence" value="ECO:0007669"/>
    <property type="project" value="TreeGrafter"/>
</dbReference>
<dbReference type="GO" id="GO:0006310">
    <property type="term" value="P:DNA recombination"/>
    <property type="evidence" value="ECO:0007669"/>
    <property type="project" value="UniProtKB-UniRule"/>
</dbReference>
<dbReference type="GO" id="GO:0006302">
    <property type="term" value="P:double-strand break repair"/>
    <property type="evidence" value="ECO:0007669"/>
    <property type="project" value="TreeGrafter"/>
</dbReference>
<dbReference type="FunFam" id="1.20.1440.120:FF:000001">
    <property type="entry name" value="DNA repair protein RecO"/>
    <property type="match status" value="1"/>
</dbReference>
<dbReference type="FunFam" id="2.40.50.140:FF:000074">
    <property type="entry name" value="DNA repair protein RecO"/>
    <property type="match status" value="1"/>
</dbReference>
<dbReference type="Gene3D" id="2.40.50.140">
    <property type="entry name" value="Nucleic acid-binding proteins"/>
    <property type="match status" value="1"/>
</dbReference>
<dbReference type="Gene3D" id="1.20.1440.120">
    <property type="entry name" value="Recombination protein O, C-terminal domain"/>
    <property type="match status" value="1"/>
</dbReference>
<dbReference type="HAMAP" id="MF_00201">
    <property type="entry name" value="RecO"/>
    <property type="match status" value="1"/>
</dbReference>
<dbReference type="InterPro" id="IPR037278">
    <property type="entry name" value="ARFGAP/RecO"/>
</dbReference>
<dbReference type="InterPro" id="IPR022572">
    <property type="entry name" value="DNA_rep/recomb_RecO_N"/>
</dbReference>
<dbReference type="InterPro" id="IPR012340">
    <property type="entry name" value="NA-bd_OB-fold"/>
</dbReference>
<dbReference type="InterPro" id="IPR003717">
    <property type="entry name" value="RecO"/>
</dbReference>
<dbReference type="InterPro" id="IPR042242">
    <property type="entry name" value="RecO_C"/>
</dbReference>
<dbReference type="NCBIfam" id="TIGR00613">
    <property type="entry name" value="reco"/>
    <property type="match status" value="1"/>
</dbReference>
<dbReference type="PANTHER" id="PTHR33991">
    <property type="entry name" value="DNA REPAIR PROTEIN RECO"/>
    <property type="match status" value="1"/>
</dbReference>
<dbReference type="PANTHER" id="PTHR33991:SF1">
    <property type="entry name" value="DNA REPAIR PROTEIN RECO"/>
    <property type="match status" value="1"/>
</dbReference>
<dbReference type="Pfam" id="PF02565">
    <property type="entry name" value="RecO_C"/>
    <property type="match status" value="1"/>
</dbReference>
<dbReference type="Pfam" id="PF11967">
    <property type="entry name" value="RecO_N"/>
    <property type="match status" value="1"/>
</dbReference>
<dbReference type="SUPFAM" id="SSF57863">
    <property type="entry name" value="ArfGap/RecO-like zinc finger"/>
    <property type="match status" value="1"/>
</dbReference>
<dbReference type="SUPFAM" id="SSF50249">
    <property type="entry name" value="Nucleic acid-binding proteins"/>
    <property type="match status" value="1"/>
</dbReference>
<comment type="function">
    <text evidence="1">Involved in DNA repair and RecF pathway recombination.</text>
</comment>
<comment type="subunit">
    <text evidence="1">Monomer.</text>
</comment>
<comment type="similarity">
    <text evidence="1">Belongs to the RecO family.</text>
</comment>
<feature type="chain" id="PRO_1000099379" description="DNA repair protein RecO">
    <location>
        <begin position="1"/>
        <end position="242"/>
    </location>
</feature>
<sequence length="242" mass="27391">MEGWQRAFVLHSRPWSETSLMLDVFTEESGRVRLVAKGARSKRSTLKGALQPFTPLLLRFGGRGEVKTLRSAEAVSLALPLSGITLYSGLYINELLSRVLEYETRFSELFFDYLHCIQSLAGVTGTPEPALRRFELALLGHLGYGVNFTHCAGSGEPVDDTMTYRYREEKGFIASVVIDNKTFTGRQLKALNAREFPDADTLRAAKRFTRMALKPYLGGKPLKSRELFRQFMPKRTVKTHYE</sequence>
<proteinExistence type="inferred from homology"/>
<reference key="1">
    <citation type="journal article" date="2008" name="J. Bacteriol.">
        <title>The complete genome sequence of Escherichia coli DH10B: insights into the biology of a laboratory workhorse.</title>
        <authorList>
            <person name="Durfee T."/>
            <person name="Nelson R."/>
            <person name="Baldwin S."/>
            <person name="Plunkett G. III"/>
            <person name="Burland V."/>
            <person name="Mau B."/>
            <person name="Petrosino J.F."/>
            <person name="Qin X."/>
            <person name="Muzny D.M."/>
            <person name="Ayele M."/>
            <person name="Gibbs R.A."/>
            <person name="Csorgo B."/>
            <person name="Posfai G."/>
            <person name="Weinstock G.M."/>
            <person name="Blattner F.R."/>
        </authorList>
    </citation>
    <scope>NUCLEOTIDE SEQUENCE [LARGE SCALE GENOMIC DNA]</scope>
    <source>
        <strain>K12 / DH10B</strain>
    </source>
</reference>
<gene>
    <name evidence="1" type="primary">recO</name>
    <name type="ordered locus">ECDH10B_2733</name>
</gene>
<organism>
    <name type="scientific">Escherichia coli (strain K12 / DH10B)</name>
    <dbReference type="NCBI Taxonomy" id="316385"/>
    <lineage>
        <taxon>Bacteria</taxon>
        <taxon>Pseudomonadati</taxon>
        <taxon>Pseudomonadota</taxon>
        <taxon>Gammaproteobacteria</taxon>
        <taxon>Enterobacterales</taxon>
        <taxon>Enterobacteriaceae</taxon>
        <taxon>Escherichia</taxon>
    </lineage>
</organism>
<protein>
    <recommendedName>
        <fullName evidence="1">DNA repair protein RecO</fullName>
    </recommendedName>
    <alternativeName>
        <fullName evidence="1">Recombination protein O</fullName>
    </alternativeName>
</protein>
<evidence type="ECO:0000255" key="1">
    <source>
        <dbReference type="HAMAP-Rule" id="MF_00201"/>
    </source>
</evidence>
<accession>B1XB39</accession>
<name>RECO_ECODH</name>